<evidence type="ECO:0000255" key="1">
    <source>
        <dbReference type="HAMAP-Rule" id="MF_01154"/>
    </source>
</evidence>
<sequence length="306" mass="34406">MELKDYYAIMGVKPTDDLKTIKTAYRRLARKYHPDVSKEPDAEARFKEVAEAWEVLSDEQRRAEYDQMWQHRNDPQFNHQFHHGDGQSFNAEDFDDIFSSIFGQHARQSRQRPAARGHDIEIEVAVFLEETLTEHKRTISYNLPVYNAFGMIEQEIPKTLNVKIPAGVGNGQRIRLKGQGTPGENGGPNGDLWLVIHIAPHPLFDIVGQDLEIVVPVSPWEAALGAKVTVPTLKESILLTIPPGSQAGQRLRVKGKGLVSKKQTGDLYAVLKIVMPPKPDENTAALWQQLADAQSSFDPRKDWGKA</sequence>
<comment type="function">
    <text evidence="1">DNA-binding protein that preferentially recognizes a curved DNA sequence. It is probably a functional analog of DnaJ; displays overlapping activities with DnaJ, but functions under different conditions, probably acting as a molecular chaperone in an adaptive response to environmental stresses other than heat shock. Lacks autonomous chaperone activity; binds native substrates and targets them for recognition by DnaK. Its activity is inhibited by the binding of CbpM.</text>
</comment>
<comment type="subcellular location">
    <subcellularLocation>
        <location evidence="1">Cytoplasm</location>
        <location evidence="1">Nucleoid</location>
    </subcellularLocation>
</comment>
<accession>Q3Z3C3</accession>
<keyword id="KW-0143">Chaperone</keyword>
<keyword id="KW-0963">Cytoplasm</keyword>
<keyword id="KW-0238">DNA-binding</keyword>
<keyword id="KW-1185">Reference proteome</keyword>
<feature type="chain" id="PRO_0000286887" description="Curved DNA-binding protein">
    <location>
        <begin position="1"/>
        <end position="306"/>
    </location>
</feature>
<feature type="domain" description="J" evidence="1">
    <location>
        <begin position="5"/>
        <end position="69"/>
    </location>
</feature>
<reference key="1">
    <citation type="journal article" date="2005" name="Nucleic Acids Res.">
        <title>Genome dynamics and diversity of Shigella species, the etiologic agents of bacillary dysentery.</title>
        <authorList>
            <person name="Yang F."/>
            <person name="Yang J."/>
            <person name="Zhang X."/>
            <person name="Chen L."/>
            <person name="Jiang Y."/>
            <person name="Yan Y."/>
            <person name="Tang X."/>
            <person name="Wang J."/>
            <person name="Xiong Z."/>
            <person name="Dong J."/>
            <person name="Xue Y."/>
            <person name="Zhu Y."/>
            <person name="Xu X."/>
            <person name="Sun L."/>
            <person name="Chen S."/>
            <person name="Nie H."/>
            <person name="Peng J."/>
            <person name="Xu J."/>
            <person name="Wang Y."/>
            <person name="Yuan Z."/>
            <person name="Wen Y."/>
            <person name="Yao Z."/>
            <person name="Shen Y."/>
            <person name="Qiang B."/>
            <person name="Hou Y."/>
            <person name="Yu J."/>
            <person name="Jin Q."/>
        </authorList>
    </citation>
    <scope>NUCLEOTIDE SEQUENCE [LARGE SCALE GENOMIC DNA]</scope>
    <source>
        <strain>Ss046</strain>
    </source>
</reference>
<proteinExistence type="inferred from homology"/>
<name>CBPA_SHISS</name>
<protein>
    <recommendedName>
        <fullName evidence="1">Curved DNA-binding protein</fullName>
    </recommendedName>
</protein>
<dbReference type="EMBL" id="CP000038">
    <property type="protein sequence ID" value="AAZ87739.1"/>
    <property type="molecule type" value="Genomic_DNA"/>
</dbReference>
<dbReference type="RefSeq" id="WP_000420610.1">
    <property type="nucleotide sequence ID" value="NC_007384.1"/>
</dbReference>
<dbReference type="SMR" id="Q3Z3C3"/>
<dbReference type="GeneID" id="93776411"/>
<dbReference type="KEGG" id="ssn:SSON_1008"/>
<dbReference type="HOGENOM" id="CLU_017633_0_0_6"/>
<dbReference type="Proteomes" id="UP000002529">
    <property type="component" value="Chromosome"/>
</dbReference>
<dbReference type="GO" id="GO:0005737">
    <property type="term" value="C:cytoplasm"/>
    <property type="evidence" value="ECO:0007669"/>
    <property type="project" value="UniProtKB-UniRule"/>
</dbReference>
<dbReference type="GO" id="GO:0009295">
    <property type="term" value="C:nucleoid"/>
    <property type="evidence" value="ECO:0007669"/>
    <property type="project" value="UniProtKB-SubCell"/>
</dbReference>
<dbReference type="GO" id="GO:0003681">
    <property type="term" value="F:bent DNA binding"/>
    <property type="evidence" value="ECO:0007669"/>
    <property type="project" value="UniProtKB-UniRule"/>
</dbReference>
<dbReference type="GO" id="GO:0051082">
    <property type="term" value="F:unfolded protein binding"/>
    <property type="evidence" value="ECO:0007669"/>
    <property type="project" value="InterPro"/>
</dbReference>
<dbReference type="GO" id="GO:0051085">
    <property type="term" value="P:chaperone cofactor-dependent protein refolding"/>
    <property type="evidence" value="ECO:0007669"/>
    <property type="project" value="TreeGrafter"/>
</dbReference>
<dbReference type="GO" id="GO:0042026">
    <property type="term" value="P:protein refolding"/>
    <property type="evidence" value="ECO:0007669"/>
    <property type="project" value="TreeGrafter"/>
</dbReference>
<dbReference type="CDD" id="cd06257">
    <property type="entry name" value="DnaJ"/>
    <property type="match status" value="1"/>
</dbReference>
<dbReference type="CDD" id="cd10747">
    <property type="entry name" value="DnaJ_C"/>
    <property type="match status" value="1"/>
</dbReference>
<dbReference type="FunFam" id="1.10.287.110:FF:000013">
    <property type="entry name" value="Curved DNA-binding protein"/>
    <property type="match status" value="1"/>
</dbReference>
<dbReference type="FunFam" id="2.60.260.20:FF:000008">
    <property type="entry name" value="Curved DNA-binding protein"/>
    <property type="match status" value="1"/>
</dbReference>
<dbReference type="FunFam" id="2.60.260.20:FF:000010">
    <property type="entry name" value="Curved DNA-binding protein"/>
    <property type="match status" value="1"/>
</dbReference>
<dbReference type="Gene3D" id="1.10.287.110">
    <property type="entry name" value="DnaJ domain"/>
    <property type="match status" value="1"/>
</dbReference>
<dbReference type="Gene3D" id="1.20.5.460">
    <property type="entry name" value="Single helix bin"/>
    <property type="match status" value="1"/>
</dbReference>
<dbReference type="Gene3D" id="2.60.260.20">
    <property type="entry name" value="Urease metallochaperone UreE, N-terminal domain"/>
    <property type="match status" value="2"/>
</dbReference>
<dbReference type="HAMAP" id="MF_01154">
    <property type="entry name" value="CbpA"/>
    <property type="match status" value="1"/>
</dbReference>
<dbReference type="InterPro" id="IPR023859">
    <property type="entry name" value="DNA-bd_curved-DNA"/>
</dbReference>
<dbReference type="InterPro" id="IPR002939">
    <property type="entry name" value="DnaJ_C"/>
</dbReference>
<dbReference type="InterPro" id="IPR001623">
    <property type="entry name" value="DnaJ_domain"/>
</dbReference>
<dbReference type="InterPro" id="IPR018253">
    <property type="entry name" value="DnaJ_domain_CS"/>
</dbReference>
<dbReference type="InterPro" id="IPR008971">
    <property type="entry name" value="HSP40/DnaJ_pept-bd"/>
</dbReference>
<dbReference type="InterPro" id="IPR036869">
    <property type="entry name" value="J_dom_sf"/>
</dbReference>
<dbReference type="NCBIfam" id="NF007618">
    <property type="entry name" value="PRK10266.1"/>
    <property type="match status" value="1"/>
</dbReference>
<dbReference type="PANTHER" id="PTHR43096">
    <property type="entry name" value="DNAJ HOMOLOG 1, MITOCHONDRIAL-RELATED"/>
    <property type="match status" value="1"/>
</dbReference>
<dbReference type="PANTHER" id="PTHR43096:SF52">
    <property type="entry name" value="DNAJ HOMOLOG 1, MITOCHONDRIAL-RELATED"/>
    <property type="match status" value="1"/>
</dbReference>
<dbReference type="Pfam" id="PF00226">
    <property type="entry name" value="DnaJ"/>
    <property type="match status" value="1"/>
</dbReference>
<dbReference type="Pfam" id="PF01556">
    <property type="entry name" value="DnaJ_C"/>
    <property type="match status" value="1"/>
</dbReference>
<dbReference type="PRINTS" id="PR00625">
    <property type="entry name" value="JDOMAIN"/>
</dbReference>
<dbReference type="SMART" id="SM00271">
    <property type="entry name" value="DnaJ"/>
    <property type="match status" value="1"/>
</dbReference>
<dbReference type="SUPFAM" id="SSF46565">
    <property type="entry name" value="Chaperone J-domain"/>
    <property type="match status" value="1"/>
</dbReference>
<dbReference type="SUPFAM" id="SSF49493">
    <property type="entry name" value="HSP40/DnaJ peptide-binding domain"/>
    <property type="match status" value="2"/>
</dbReference>
<dbReference type="PROSITE" id="PS00636">
    <property type="entry name" value="DNAJ_1"/>
    <property type="match status" value="1"/>
</dbReference>
<dbReference type="PROSITE" id="PS50076">
    <property type="entry name" value="DNAJ_2"/>
    <property type="match status" value="1"/>
</dbReference>
<organism>
    <name type="scientific">Shigella sonnei (strain Ss046)</name>
    <dbReference type="NCBI Taxonomy" id="300269"/>
    <lineage>
        <taxon>Bacteria</taxon>
        <taxon>Pseudomonadati</taxon>
        <taxon>Pseudomonadota</taxon>
        <taxon>Gammaproteobacteria</taxon>
        <taxon>Enterobacterales</taxon>
        <taxon>Enterobacteriaceae</taxon>
        <taxon>Shigella</taxon>
    </lineage>
</organism>
<gene>
    <name evidence="1" type="primary">cbpA</name>
    <name type="ordered locus">SSON_1008</name>
</gene>